<accession>B7LNW7</accession>
<accession>P24747</accession>
<reference key="1">
    <citation type="journal article" date="2009" name="PLoS Genet.">
        <title>Organised genome dynamics in the Escherichia coli species results in highly diverse adaptive paths.</title>
        <authorList>
            <person name="Touchon M."/>
            <person name="Hoede C."/>
            <person name="Tenaillon O."/>
            <person name="Barbe V."/>
            <person name="Baeriswyl S."/>
            <person name="Bidet P."/>
            <person name="Bingen E."/>
            <person name="Bonacorsi S."/>
            <person name="Bouchier C."/>
            <person name="Bouvet O."/>
            <person name="Calteau A."/>
            <person name="Chiapello H."/>
            <person name="Clermont O."/>
            <person name="Cruveiller S."/>
            <person name="Danchin A."/>
            <person name="Diard M."/>
            <person name="Dossat C."/>
            <person name="Karoui M.E."/>
            <person name="Frapy E."/>
            <person name="Garry L."/>
            <person name="Ghigo J.M."/>
            <person name="Gilles A.M."/>
            <person name="Johnson J."/>
            <person name="Le Bouguenec C."/>
            <person name="Lescat M."/>
            <person name="Mangenot S."/>
            <person name="Martinez-Jehanne V."/>
            <person name="Matic I."/>
            <person name="Nassif X."/>
            <person name="Oztas S."/>
            <person name="Petit M.A."/>
            <person name="Pichon C."/>
            <person name="Rouy Z."/>
            <person name="Ruf C.S."/>
            <person name="Schneider D."/>
            <person name="Tourret J."/>
            <person name="Vacherie B."/>
            <person name="Vallenet D."/>
            <person name="Medigue C."/>
            <person name="Rocha E.P.C."/>
            <person name="Denamur E."/>
        </authorList>
    </citation>
    <scope>NUCLEOTIDE SEQUENCE [LARGE SCALE GENOMIC DNA]</scope>
    <source>
        <strain>ATCC 35469 / DSM 13698 / BCRC 15582 / CCUG 18766 / IAM 14443 / JCM 21226 / LMG 7866 / NBRC 102419 / NCTC 12128 / CDC 0568-73</strain>
    </source>
</reference>
<reference key="2">
    <citation type="journal article" date="1991" name="J. Gen. Microbiol.">
        <title>Molecular and evolutionary relationships among enteric bacteria.</title>
        <authorList>
            <person name="Lawrence J.G."/>
            <person name="Ochman H."/>
            <person name="Hartl D.L."/>
        </authorList>
    </citation>
    <scope>NUCLEOTIDE SEQUENCE [GENOMIC DNA] OF 100-342</scope>
</reference>
<evidence type="ECO:0000255" key="1">
    <source>
        <dbReference type="HAMAP-Rule" id="MF_00842"/>
    </source>
</evidence>
<evidence type="ECO:0000303" key="2">
    <source>
    </source>
</evidence>
<evidence type="ECO:0000305" key="3"/>
<sequence>MKKTAIAIAVALAGFATVAQAAPKDNTWYTGAKLGWSQYHDTGFIDNNGPTHENQLGAGAFGGYQVNPYVGFEMGYDWLGRMPYKGSVENGAYKAQGVQLTAKLGYPITDDLDIYTRLGGMVWRADTKAHNNVTGESEKNHDTGVSPVFAGGVEWAITPEIATRLEYQWTNNIGDANTIGTRPDNGLLSLGVSYRFGQGEAAPVVAPAPAPAPEVQTKHFTLKSDVLFNFNKATLKPEGQAALDQLYSQLSNLDPKDGSVVVLGYTDRIGSDAYNQGLSERRAQSVVDYLISKGIPADKISARGMGESNPVTGNTCDNVKQRAALIDCLAPDRRVEIEVKGIKDVVTQPQA</sequence>
<organism>
    <name type="scientific">Escherichia fergusonii (strain ATCC 35469 / DSM 13698 / CCUG 18766 / IAM 14443 / JCM 21226 / LMG 7866 / NBRC 102419 / NCTC 12128 / CDC 0568-73)</name>
    <dbReference type="NCBI Taxonomy" id="585054"/>
    <lineage>
        <taxon>Bacteria</taxon>
        <taxon>Pseudomonadati</taxon>
        <taxon>Pseudomonadota</taxon>
        <taxon>Gammaproteobacteria</taxon>
        <taxon>Enterobacterales</taxon>
        <taxon>Enterobacteriaceae</taxon>
        <taxon>Escherichia</taxon>
    </lineage>
</organism>
<keyword id="KW-0998">Cell outer membrane</keyword>
<keyword id="KW-0184">Conjugation</keyword>
<keyword id="KW-1015">Disulfide bond</keyword>
<keyword id="KW-0406">Ion transport</keyword>
<keyword id="KW-0472">Membrane</keyword>
<keyword id="KW-0626">Porin</keyword>
<keyword id="KW-0677">Repeat</keyword>
<keyword id="KW-0732">Signal</keyword>
<keyword id="KW-0812">Transmembrane</keyword>
<keyword id="KW-1134">Transmembrane beta strand</keyword>
<keyword id="KW-0813">Transport</keyword>
<proteinExistence type="inferred from homology"/>
<feature type="signal peptide" evidence="1">
    <location>
        <begin position="1"/>
        <end position="21"/>
    </location>
</feature>
<feature type="chain" id="PRO_0000367319" description="Outer membrane protein A" evidence="1">
    <location>
        <begin position="22"/>
        <end position="351"/>
    </location>
</feature>
<feature type="transmembrane region" description="Beta stranded" evidence="1">
    <location>
        <begin position="27"/>
        <end position="37"/>
    </location>
</feature>
<feature type="transmembrane region" description="Beta stranded" evidence="1">
    <location>
        <begin position="55"/>
        <end position="66"/>
    </location>
</feature>
<feature type="transmembrane region" description="Beta stranded" evidence="1">
    <location>
        <begin position="70"/>
        <end position="78"/>
    </location>
</feature>
<feature type="transmembrane region" description="Beta stranded" evidence="1">
    <location>
        <begin position="96"/>
        <end position="107"/>
    </location>
</feature>
<feature type="transmembrane region" description="Beta stranded" evidence="1">
    <location>
        <begin position="112"/>
        <end position="120"/>
    </location>
</feature>
<feature type="transmembrane region" description="Beta stranded" evidence="1">
    <location>
        <begin position="147"/>
        <end position="156"/>
    </location>
</feature>
<feature type="transmembrane region" description="Beta stranded" evidence="1">
    <location>
        <begin position="161"/>
        <end position="168"/>
    </location>
</feature>
<feature type="transmembrane region" description="Beta stranded" evidence="1">
    <location>
        <begin position="187"/>
        <end position="195"/>
    </location>
</feature>
<feature type="repeat" description="1">
    <location>
        <begin position="206"/>
        <end position="207"/>
    </location>
</feature>
<feature type="repeat" description="2">
    <location>
        <begin position="208"/>
        <end position="209"/>
    </location>
</feature>
<feature type="repeat" description="3">
    <location>
        <begin position="210"/>
        <end position="211"/>
    </location>
</feature>
<feature type="repeat" description="4">
    <location>
        <begin position="212"/>
        <end position="213"/>
    </location>
</feature>
<feature type="domain" description="OmpA-like" evidence="1">
    <location>
        <begin position="215"/>
        <end position="343"/>
    </location>
</feature>
<feature type="region of interest" description="4 X 2 AA tandem repeats of A-P">
    <location>
        <begin position="206"/>
        <end position="213"/>
    </location>
</feature>
<feature type="site" description="Part of salt bridge gating mechanism" evidence="1">
    <location>
        <position position="73"/>
    </location>
</feature>
<feature type="site" description="Part of salt bridge gating mechanism" evidence="1">
    <location>
        <position position="164"/>
    </location>
</feature>
<feature type="disulfide bond" evidence="1">
    <location>
        <begin position="316"/>
        <end position="328"/>
    </location>
</feature>
<protein>
    <recommendedName>
        <fullName evidence="1">Outer membrane protein A</fullName>
    </recommendedName>
    <alternativeName>
        <fullName evidence="1">Outer membrane porin A</fullName>
    </alternativeName>
    <alternativeName>
        <fullName evidence="2">Outer membrane protein 3A</fullName>
    </alternativeName>
</protein>
<comment type="function">
    <text evidence="1">With TolR probably plays a role in maintaining the position of the peptidoglycan cell wall in the periplasm. Acts as a porin with low permeability that allows slow penetration of small solutes; an internal gate slows down solute passage.</text>
</comment>
<comment type="function">
    <text evidence="1">Required for conjugation with F-type plasmids; probably serves as the mating receptor on recipient cells.</text>
</comment>
<comment type="subunit">
    <text evidence="1">Monomer and homodimer.</text>
</comment>
<comment type="subcellular location">
    <subcellularLocation>
        <location evidence="1">Cell outer membrane</location>
        <topology evidence="1">Multi-pass membrane protein</topology>
    </subcellularLocation>
</comment>
<comment type="domain">
    <text evidence="1">The extracellular loops are most variable in sequence, and in some bacteria confer sensitivity to phage and/or colicins.</text>
</comment>
<comment type="similarity">
    <text evidence="1">Belongs to the outer membrane OOP (TC 1.B.6) superfamily. OmpA family.</text>
</comment>
<comment type="sequence caution" evidence="3">
    <conflict type="erroneous initiation">
        <sequence resource="EMBL-CDS" id="CAQ88623"/>
    </conflict>
    <text>Extended N-terminus.</text>
</comment>
<gene>
    <name evidence="1" type="primary">ompA</name>
    <name type="ordered locus">EFER_1094</name>
</gene>
<name>OMPA_ESCF3</name>
<dbReference type="EMBL" id="CU928158">
    <property type="protein sequence ID" value="CAQ88623.1"/>
    <property type="status" value="ALT_INIT"/>
    <property type="molecule type" value="Genomic_DNA"/>
</dbReference>
<dbReference type="EMBL" id="M63351">
    <property type="protein sequence ID" value="AAA24232.1"/>
    <property type="molecule type" value="Genomic_DNA"/>
</dbReference>
<dbReference type="PIR" id="I84531">
    <property type="entry name" value="I84531"/>
</dbReference>
<dbReference type="RefSeq" id="WP_024256413.1">
    <property type="nucleotide sequence ID" value="NC_011740.1"/>
</dbReference>
<dbReference type="BMRB" id="B7LNW7"/>
<dbReference type="SMR" id="B7LNW7"/>
<dbReference type="GeneID" id="75057855"/>
<dbReference type="KEGG" id="efe:EFER_1094"/>
<dbReference type="HOGENOM" id="CLU_031536_0_0_6"/>
<dbReference type="OrthoDB" id="1149075at2"/>
<dbReference type="Proteomes" id="UP000000745">
    <property type="component" value="Chromosome"/>
</dbReference>
<dbReference type="GO" id="GO:0009279">
    <property type="term" value="C:cell outer membrane"/>
    <property type="evidence" value="ECO:0007669"/>
    <property type="project" value="UniProtKB-SubCell"/>
</dbReference>
<dbReference type="GO" id="GO:0046930">
    <property type="term" value="C:pore complex"/>
    <property type="evidence" value="ECO:0007669"/>
    <property type="project" value="UniProtKB-KW"/>
</dbReference>
<dbReference type="GO" id="GO:0015288">
    <property type="term" value="F:porin activity"/>
    <property type="evidence" value="ECO:0007669"/>
    <property type="project" value="UniProtKB-UniRule"/>
</dbReference>
<dbReference type="GO" id="GO:0034220">
    <property type="term" value="P:monoatomic ion transmembrane transport"/>
    <property type="evidence" value="ECO:0007669"/>
    <property type="project" value="UniProtKB-UniRule"/>
</dbReference>
<dbReference type="CDD" id="cd07185">
    <property type="entry name" value="OmpA_C-like"/>
    <property type="match status" value="1"/>
</dbReference>
<dbReference type="FunFam" id="2.40.160.20:FF:000003">
    <property type="entry name" value="Outer membrane protein A"/>
    <property type="match status" value="1"/>
</dbReference>
<dbReference type="FunFam" id="3.30.1330.60:FF:000004">
    <property type="entry name" value="Outer membrane protein A"/>
    <property type="match status" value="1"/>
</dbReference>
<dbReference type="Gene3D" id="2.40.160.20">
    <property type="match status" value="1"/>
</dbReference>
<dbReference type="Gene3D" id="3.30.1330.60">
    <property type="entry name" value="OmpA-like domain"/>
    <property type="match status" value="1"/>
</dbReference>
<dbReference type="HAMAP" id="MF_00842">
    <property type="entry name" value="OmpA"/>
    <property type="match status" value="1"/>
</dbReference>
<dbReference type="InterPro" id="IPR050330">
    <property type="entry name" value="Bact_OuterMem_StrucFunc"/>
</dbReference>
<dbReference type="InterPro" id="IPR011250">
    <property type="entry name" value="OMP/PagP_b-brl"/>
</dbReference>
<dbReference type="InterPro" id="IPR006664">
    <property type="entry name" value="OMP_bac"/>
</dbReference>
<dbReference type="InterPro" id="IPR002368">
    <property type="entry name" value="OmpA"/>
</dbReference>
<dbReference type="InterPro" id="IPR006665">
    <property type="entry name" value="OmpA-like"/>
</dbReference>
<dbReference type="InterPro" id="IPR006690">
    <property type="entry name" value="OMPA-like_CS"/>
</dbReference>
<dbReference type="InterPro" id="IPR036737">
    <property type="entry name" value="OmpA-like_sf"/>
</dbReference>
<dbReference type="InterPro" id="IPR000498">
    <property type="entry name" value="OmpA-like_TM_dom"/>
</dbReference>
<dbReference type="NCBIfam" id="NF008071">
    <property type="entry name" value="PRK10808.1"/>
    <property type="match status" value="1"/>
</dbReference>
<dbReference type="PANTHER" id="PTHR30329:SF21">
    <property type="entry name" value="LIPOPROTEIN YIAD-RELATED"/>
    <property type="match status" value="1"/>
</dbReference>
<dbReference type="PANTHER" id="PTHR30329">
    <property type="entry name" value="STATOR ELEMENT OF FLAGELLAR MOTOR COMPLEX"/>
    <property type="match status" value="1"/>
</dbReference>
<dbReference type="Pfam" id="PF00691">
    <property type="entry name" value="OmpA"/>
    <property type="match status" value="1"/>
</dbReference>
<dbReference type="Pfam" id="PF01389">
    <property type="entry name" value="OmpA_membrane"/>
    <property type="match status" value="1"/>
</dbReference>
<dbReference type="PRINTS" id="PR01021">
    <property type="entry name" value="OMPADOMAIN"/>
</dbReference>
<dbReference type="PRINTS" id="PR01022">
    <property type="entry name" value="OUTRMMBRANEA"/>
</dbReference>
<dbReference type="SUPFAM" id="SSF56925">
    <property type="entry name" value="OMPA-like"/>
    <property type="match status" value="1"/>
</dbReference>
<dbReference type="SUPFAM" id="SSF103088">
    <property type="entry name" value="OmpA-like"/>
    <property type="match status" value="1"/>
</dbReference>
<dbReference type="PROSITE" id="PS01068">
    <property type="entry name" value="OMPA_1"/>
    <property type="match status" value="1"/>
</dbReference>
<dbReference type="PROSITE" id="PS51123">
    <property type="entry name" value="OMPA_2"/>
    <property type="match status" value="1"/>
</dbReference>